<comment type="function">
    <text evidence="1">The papain-like proteinase 1 (PL1-PRO) and papain-like proteinase 2 (PL2-PRO) are responsible for the cleavages located at the N-terminus of the replicase polyprotein. In addition, PLP2 possesses a deubiquitinating/deISGylating activity and processes both 'Lys-48'- and 'Lys-63'-linked polyubiquitin chains from cellular substrates. Antagonizes innate immune induction of type I interferon by blocking the phosphorylation, dimerization and subsequent nuclear translocation of host IRF-3 (By similarity).</text>
</comment>
<comment type="function">
    <molecule>3C-like proteinase nsp5</molecule>
    <text evidence="7">Responsible for the majority of cleavages as it cleaves the C-terminus of replicase polyprotein at 11 sites. Recognizes substrates containing the core sequence [ILMVF]-Q-|-[SGACN]. Inhibited by the substrate-analog Cbz-Val-Asn-Ser-Thr-Leu-Gln-CMK. Also contains an ADP-ribose-1''-phosphate (ADRP)-binding function (By similarity).</text>
</comment>
<comment type="function">
    <text evidence="1">Nsp7-nsp8 hexadecamer may possibly confer processivity to the polymerase, maybe by binding to dsRNA or by producing primers utilized by the latter.</text>
</comment>
<comment type="function">
    <molecule>RNA-capping enzyme subunit nsp9</molecule>
    <text evidence="2">Catalytic subunit of viral RNA capping enzyme which catalyzes the RNA guanylyltransferase reaction for genomic and sub-genomic RNAs. The kinase-like NiRAN domain of NSP12 transfers RNA to the amino terminus of NSP9, forming a covalent RNA-protein intermediate. Subsequently, the NiRAN domain transfers RNA to GDP, forming the core cap structure GpppA-RNA. The NSP14 and NSP16 methyltransferases then add methyl groups to form functional cap structures.</text>
</comment>
<comment type="function">
    <molecule>Non-structural protein 1</molecule>
    <text evidence="1">Binds to the 40S ribosomal subunit and inhibits host translation. The nsp1-40S ribosome complex further induces an endonucleolytic cleavage near the 5'UTR of host mRNAs, targeting them for degradation. By suppressing host gene expression, nsp1 facilitates efficient viral gene expression in infected cells and evasion from host immune response (By similarity).</text>
</comment>
<comment type="catalytic activity">
    <molecule>Papain-like protease nsp3</molecule>
    <reaction evidence="2">
        <text>Thiol-dependent hydrolysis of ester, thioester, amide, peptide and isopeptide bonds formed by the C-terminal Gly of ubiquitin (a 76-residue protein attached to proteins as an intracellular targeting signal).</text>
        <dbReference type="EC" id="3.4.19.12"/>
    </reaction>
</comment>
<comment type="catalytic activity">
    <molecule>3C-like proteinase nsp5</molecule>
    <reaction evidence="2">
        <text>TSAVLQ-|-SGFRK-NH2 and SGVTFQ-|-GKFKK the two peptides corresponding to the two self-cleavage sites of the SARS 3C-like proteinase are the two most reactive peptide substrates. The enzyme exhibits a strong preference for substrates containing Gln at P1 position and Leu at P2 position.</text>
        <dbReference type="EC" id="3.4.22.69"/>
    </reaction>
</comment>
<comment type="catalytic activity">
    <molecule>RNA-capping enzyme subunit nsp9</molecule>
    <reaction evidence="2">
        <text>a 5'-end diphospho-ribonucleoside in mRNA + GTP + H(+) = a 5'-end (5'-triphosphoguanosine)-ribonucleoside in mRNA + diphosphate</text>
        <dbReference type="Rhea" id="RHEA:67012"/>
        <dbReference type="Rhea" id="RHEA-COMP:17165"/>
        <dbReference type="Rhea" id="RHEA-COMP:17166"/>
        <dbReference type="ChEBI" id="CHEBI:15378"/>
        <dbReference type="ChEBI" id="CHEBI:33019"/>
        <dbReference type="ChEBI" id="CHEBI:37565"/>
        <dbReference type="ChEBI" id="CHEBI:167616"/>
        <dbReference type="ChEBI" id="CHEBI:167617"/>
        <dbReference type="EC" id="2.7.7.50"/>
    </reaction>
    <physiologicalReaction direction="right-to-left" evidence="2">
        <dbReference type="Rhea" id="RHEA:67014"/>
    </physiologicalReaction>
</comment>
<comment type="subunit">
    <text evidence="1">3CL-PRO exists as monomer and homodimer. Eight copies of nsp7 and eight copies of nsp8 assemble to form a heterohexadecamer. Nsp9 is a dimer. Nsp10 forms a dodecamer (By similarity).</text>
</comment>
<comment type="subcellular location">
    <molecule>Papain-like protease nsp3</molecule>
    <subcellularLocation>
        <location evidence="23">Host membrane</location>
        <topology evidence="23">Multi-pass membrane protein</topology>
    </subcellularLocation>
</comment>
<comment type="subcellular location">
    <molecule>Non-structural protein 4</molecule>
    <subcellularLocation>
        <location evidence="23">Host membrane</location>
        <topology evidence="23">Multi-pass membrane protein</topology>
    </subcellularLocation>
</comment>
<comment type="subcellular location">
    <molecule>Non-structural protein 6</molecule>
    <subcellularLocation>
        <location evidence="23">Host membrane</location>
        <topology evidence="23">Multi-pass membrane protein</topology>
    </subcellularLocation>
</comment>
<comment type="subcellular location">
    <molecule>Non-structural protein 7</molecule>
    <subcellularLocation>
        <location evidence="1">Host cytoplasm</location>
        <location evidence="1">Host perinuclear region</location>
    </subcellularLocation>
    <text evidence="1">nsp7, nsp8, nsp9 and nsp10 are localized in cytoplasmic foci, largely perinuclear. Late in infection, they merge into confluent complexes (By similarity).</text>
</comment>
<comment type="subcellular location">
    <molecule>Non-structural protein 8</molecule>
    <subcellularLocation>
        <location evidence="1">Host cytoplasm</location>
        <location evidence="1">Host perinuclear region</location>
    </subcellularLocation>
    <text evidence="1">nsp7, nsp8, nsp9 and nsp10 are localized in cytoplasmic foci, largely perinuclear. Late in infection, they merge into confluent complexes (By similarity).</text>
</comment>
<comment type="subcellular location">
    <molecule>RNA-capping enzyme subunit nsp9</molecule>
    <subcellularLocation>
        <location evidence="1">Host cytoplasm</location>
        <location evidence="1">Host perinuclear region</location>
    </subcellularLocation>
    <text evidence="1">nsp7, nsp8, nsp9 and nsp10 are localized in cytoplasmic foci, largely perinuclear. Late in infection, they merge into confluent complexes (By similarity).</text>
</comment>
<comment type="subcellular location">
    <molecule>Non-structural protein 10</molecule>
    <subcellularLocation>
        <location evidence="1">Host cytoplasm</location>
        <location evidence="1">Host perinuclear region</location>
    </subcellularLocation>
    <text evidence="1">nsp7, nsp8, nsp9 and nsp10 are localized in cytoplasmic foci, largely perinuclear. Late in infection, they merge into confluent complexes (By similarity).</text>
</comment>
<comment type="alternative products">
    <event type="ribosomal frameshifting"/>
    <isoform>
        <id>P0C6T9-1</id>
        <name>Replicase polyprotein 1a</name>
        <name>pp1a</name>
        <name>ORF1a polyprotein</name>
        <sequence type="displayed"/>
    </isoform>
    <isoform>
        <id>P0C6W8-1</id>
        <name>Replicase polyprotein 1ab</name>
        <name>pp1ab</name>
        <sequence type="external"/>
    </isoform>
</comment>
<comment type="domain">
    <text>The hydrophobic domains (HD) could mediate the membrane association of the replication complex and thereby alter the architecture of the host cell membrane.</text>
</comment>
<comment type="PTM">
    <text evidence="1">Specific enzymatic cleavages in vivo by its own proteases yield mature proteins. 3CL-PRO and PL-PRO proteinases are autocatalytically processed (By similarity).</text>
</comment>
<comment type="miscellaneous">
    <molecule>Isoform Replicase polyprotein 1a</molecule>
    <text>Produced by conventional translation.</text>
</comment>
<comment type="similarity">
    <text evidence="23">Belongs to the coronaviruses polyprotein 1ab family.</text>
</comment>
<organismHost>
    <name type="scientific">Bos taurus</name>
    <name type="common">Bovine</name>
    <dbReference type="NCBI Taxonomy" id="9913"/>
</organismHost>
<name>R1A_CVBLU</name>
<organism>
    <name type="scientific">Bovine coronavirus (strain 98TXSF-110-LUN)</name>
    <name type="common">BCoV-LUN</name>
    <name type="synonym">BCV</name>
    <dbReference type="NCBI Taxonomy" id="233264"/>
    <lineage>
        <taxon>Viruses</taxon>
        <taxon>Riboviria</taxon>
        <taxon>Orthornavirae</taxon>
        <taxon>Pisuviricota</taxon>
        <taxon>Pisoniviricetes</taxon>
        <taxon>Nidovirales</taxon>
        <taxon>Cornidovirineae</taxon>
        <taxon>Coronaviridae</taxon>
        <taxon>Orthocoronavirinae</taxon>
        <taxon>Betacoronavirus</taxon>
        <taxon>Embecovirus</taxon>
        <taxon>Betacoronavirus 1</taxon>
    </lineage>
</organism>
<keyword id="KW-1072">Activation of host autophagy by virus</keyword>
<keyword id="KW-1132">Decay of host mRNAs by virus</keyword>
<keyword id="KW-1015">Disulfide bond</keyword>
<keyword id="KW-0255">Endonuclease</keyword>
<keyword id="KW-1262">Eukaryotic host gene expression shutoff by virus</keyword>
<keyword id="KW-1193">Eukaryotic host translation shutoff by virus</keyword>
<keyword id="KW-1035">Host cytoplasm</keyword>
<keyword id="KW-1190">Host gene expression shutoff by virus</keyword>
<keyword id="KW-1043">Host membrane</keyword>
<keyword id="KW-1192">Host mRNA suppression by virus</keyword>
<keyword id="KW-0945">Host-virus interaction</keyword>
<keyword id="KW-0378">Hydrolase</keyword>
<keyword id="KW-1090">Inhibition of host innate immune response by virus</keyword>
<keyword id="KW-1114">Inhibition of host interferon signaling pathway by virus</keyword>
<keyword id="KW-1092">Inhibition of host IRF3 by virus</keyword>
<keyword id="KW-1095">Inhibition of host ISG15 by virus</keyword>
<keyword id="KW-1113">Inhibition of host RLR pathway by virus</keyword>
<keyword id="KW-0922">Interferon antiviral system evasion</keyword>
<keyword id="KW-0472">Membrane</keyword>
<keyword id="KW-0479">Metal-binding</keyword>
<keyword id="KW-0489">Methyltransferase</keyword>
<keyword id="KW-1127">Modulation of host ubiquitin pathway by viral deubiquitinase</keyword>
<keyword id="KW-1130">Modulation of host ubiquitin pathway by virus</keyword>
<keyword id="KW-0540">Nuclease</keyword>
<keyword id="KW-0645">Protease</keyword>
<keyword id="KW-0677">Repeat</keyword>
<keyword id="KW-0688">Ribosomal frameshifting</keyword>
<keyword id="KW-0694">RNA-binding</keyword>
<keyword id="KW-0788">Thiol protease</keyword>
<keyword id="KW-0808">Transferase</keyword>
<keyword id="KW-0812">Transmembrane</keyword>
<keyword id="KW-1133">Transmembrane helix</keyword>
<keyword id="KW-0833">Ubl conjugation pathway</keyword>
<keyword id="KW-0899">Viral immunoevasion</keyword>
<keyword id="KW-0862">Zinc</keyword>
<keyword id="KW-0863">Zinc-finger</keyword>
<protein>
    <recommendedName>
        <fullName>Replicase polyprotein 1a</fullName>
        <shortName>pp1a</shortName>
    </recommendedName>
    <alternativeName>
        <fullName>ORF1a polyprotein</fullName>
    </alternativeName>
    <component>
        <recommendedName>
            <fullName>Non-structural protein 1</fullName>
            <shortName>nsp1</shortName>
        </recommendedName>
        <alternativeName>
            <fullName>p28</fullName>
        </alternativeName>
    </component>
    <component>
        <recommendedName>
            <fullName>Non-structural protein 2</fullName>
            <shortName>nsp2</shortName>
        </recommendedName>
        <alternativeName>
            <fullName>p65</fullName>
        </alternativeName>
    </component>
    <component>
        <recommendedName>
            <fullName>Papain-like protease nsp3</fullName>
            <shortName>PL-PRO</shortName>
            <ecNumber>3.4.19.12</ecNumber>
            <ecNumber>3.4.22.-</ecNumber>
        </recommendedName>
        <alternativeName>
            <fullName>Non-structural protein 3</fullName>
            <shortName>nsp3</shortName>
        </alternativeName>
        <alternativeName>
            <fullName>PL1-PRO/PL2-PRO</fullName>
        </alternativeName>
        <alternativeName>
            <fullName>PL1/PL2</fullName>
        </alternativeName>
        <alternativeName>
            <fullName>PL2-PRO</fullName>
        </alternativeName>
        <alternativeName>
            <fullName>Papain-like proteinases 1/2</fullName>
        </alternativeName>
        <alternativeName>
            <fullName>p210</fullName>
        </alternativeName>
    </component>
    <component>
        <recommendedName>
            <fullName>Non-structural protein 4</fullName>
            <shortName>nsp4</shortName>
        </recommendedName>
        <alternativeName>
            <fullName>Peptide HD2</fullName>
        </alternativeName>
        <alternativeName>
            <fullName>p44</fullName>
        </alternativeName>
    </component>
    <component>
        <recommendedName>
            <fullName>3C-like proteinase nsp5</fullName>
            <shortName>3CL-PRO</shortName>
            <shortName>3CLp</shortName>
            <ecNumber>3.4.22.69</ecNumber>
        </recommendedName>
        <alternativeName>
            <fullName>M-PRO</fullName>
        </alternativeName>
        <alternativeName>
            <fullName>nsp5</fullName>
        </alternativeName>
        <alternativeName>
            <fullName>p27</fullName>
        </alternativeName>
    </component>
    <component>
        <recommendedName>
            <fullName>Non-structural protein 6</fullName>
            <shortName>nsp6</shortName>
        </recommendedName>
    </component>
    <component>
        <recommendedName>
            <fullName>Non-structural protein 7</fullName>
            <shortName>nsp7</shortName>
        </recommendedName>
        <alternativeName>
            <fullName>p10</fullName>
        </alternativeName>
    </component>
    <component>
        <recommendedName>
            <fullName>Non-structural protein 8</fullName>
            <shortName>nsp8</shortName>
        </recommendedName>
        <alternativeName>
            <fullName>p22</fullName>
        </alternativeName>
    </component>
    <component>
        <recommendedName>
            <fullName>RNA-capping enzyme subunit nsp9</fullName>
        </recommendedName>
        <alternativeName>
            <fullName>Non-structural protein 9</fullName>
            <shortName>nsp9</shortName>
            <ecNumber>2.7.7.50</ecNumber>
        </alternativeName>
        <alternativeName>
            <fullName>p12</fullName>
        </alternativeName>
    </component>
    <component>
        <recommendedName>
            <fullName>Non-structural protein 10</fullName>
            <shortName>nsp10</shortName>
        </recommendedName>
        <alternativeName>
            <fullName>Growth factor-like peptide</fullName>
            <shortName>GFL</shortName>
        </alternativeName>
        <alternativeName>
            <fullName>p15</fullName>
        </alternativeName>
    </component>
    <component>
        <recommendedName>
            <fullName>Non-structural protein 11</fullName>
            <shortName>nsp11</shortName>
        </recommendedName>
    </component>
</protein>
<proteinExistence type="inferred from homology"/>
<accession>P0C6T9</accession>
<accession>Q8V439</accession>
<dbReference type="EC" id="3.4.19.12"/>
<dbReference type="EC" id="3.4.22.-"/>
<dbReference type="EC" id="3.4.22.69"/>
<dbReference type="EC" id="2.7.7.50"/>
<dbReference type="EMBL" id="AF391542">
    <property type="protein sequence ID" value="AAL57315.1"/>
    <property type="molecule type" value="Genomic_RNA"/>
</dbReference>
<dbReference type="SMR" id="P0C6T9"/>
<dbReference type="Proteomes" id="UP000008571">
    <property type="component" value="Genome"/>
</dbReference>
<dbReference type="GO" id="GO:0033644">
    <property type="term" value="C:host cell membrane"/>
    <property type="evidence" value="ECO:0007669"/>
    <property type="project" value="UniProtKB-SubCell"/>
</dbReference>
<dbReference type="GO" id="GO:0044220">
    <property type="term" value="C:host cell perinuclear region of cytoplasm"/>
    <property type="evidence" value="ECO:0007669"/>
    <property type="project" value="UniProtKB-SubCell"/>
</dbReference>
<dbReference type="GO" id="GO:0016020">
    <property type="term" value="C:membrane"/>
    <property type="evidence" value="ECO:0007669"/>
    <property type="project" value="UniProtKB-KW"/>
</dbReference>
<dbReference type="GO" id="GO:0004843">
    <property type="term" value="F:cysteine-type deubiquitinase activity"/>
    <property type="evidence" value="ECO:0007669"/>
    <property type="project" value="UniProtKB-EC"/>
</dbReference>
<dbReference type="GO" id="GO:0004197">
    <property type="term" value="F:cysteine-type endopeptidase activity"/>
    <property type="evidence" value="ECO:0007669"/>
    <property type="project" value="InterPro"/>
</dbReference>
<dbReference type="GO" id="GO:0004519">
    <property type="term" value="F:endonuclease activity"/>
    <property type="evidence" value="ECO:0007669"/>
    <property type="project" value="UniProtKB-KW"/>
</dbReference>
<dbReference type="GO" id="GO:0008168">
    <property type="term" value="F:methyltransferase activity"/>
    <property type="evidence" value="ECO:0007669"/>
    <property type="project" value="UniProtKB-KW"/>
</dbReference>
<dbReference type="GO" id="GO:0008242">
    <property type="term" value="F:omega peptidase activity"/>
    <property type="evidence" value="ECO:0007669"/>
    <property type="project" value="InterPro"/>
</dbReference>
<dbReference type="GO" id="GO:0003968">
    <property type="term" value="F:RNA-directed RNA polymerase activity"/>
    <property type="evidence" value="ECO:0007669"/>
    <property type="project" value="InterPro"/>
</dbReference>
<dbReference type="GO" id="GO:0003727">
    <property type="term" value="F:single-stranded RNA binding"/>
    <property type="evidence" value="ECO:0007669"/>
    <property type="project" value="InterPro"/>
</dbReference>
<dbReference type="GO" id="GO:0008270">
    <property type="term" value="F:zinc ion binding"/>
    <property type="evidence" value="ECO:0007669"/>
    <property type="project" value="UniProtKB-KW"/>
</dbReference>
<dbReference type="GO" id="GO:0032259">
    <property type="term" value="P:methylation"/>
    <property type="evidence" value="ECO:0007669"/>
    <property type="project" value="UniProtKB-KW"/>
</dbReference>
<dbReference type="GO" id="GO:0006508">
    <property type="term" value="P:proteolysis"/>
    <property type="evidence" value="ECO:0007669"/>
    <property type="project" value="UniProtKB-KW"/>
</dbReference>
<dbReference type="GO" id="GO:0010506">
    <property type="term" value="P:regulation of autophagy"/>
    <property type="evidence" value="ECO:0007669"/>
    <property type="project" value="InterPro"/>
</dbReference>
<dbReference type="GO" id="GO:0039520">
    <property type="term" value="P:symbiont-mediated activation of host autophagy"/>
    <property type="evidence" value="ECO:0007669"/>
    <property type="project" value="UniProtKB-KW"/>
</dbReference>
<dbReference type="GO" id="GO:0039595">
    <property type="term" value="P:symbiont-mediated degradation of host mRNA"/>
    <property type="evidence" value="ECO:0007669"/>
    <property type="project" value="UniProtKB-KW"/>
</dbReference>
<dbReference type="GO" id="GO:0039648">
    <property type="term" value="P:symbiont-mediated perturbation of host ubiquitin-like protein modification"/>
    <property type="evidence" value="ECO:0007669"/>
    <property type="project" value="UniProtKB-KW"/>
</dbReference>
<dbReference type="GO" id="GO:0039548">
    <property type="term" value="P:symbiont-mediated suppression of host cytoplasmic pattern recognition receptor signaling pathway via inhibition of IRF3 activity"/>
    <property type="evidence" value="ECO:0007669"/>
    <property type="project" value="UniProtKB-KW"/>
</dbReference>
<dbReference type="GO" id="GO:0039657">
    <property type="term" value="P:symbiont-mediated suppression of host gene expression"/>
    <property type="evidence" value="ECO:0007669"/>
    <property type="project" value="UniProtKB-KW"/>
</dbReference>
<dbReference type="GO" id="GO:0039579">
    <property type="term" value="P:symbiont-mediated suppression of host ISG15-protein conjugation"/>
    <property type="evidence" value="ECO:0007669"/>
    <property type="project" value="UniProtKB-KW"/>
</dbReference>
<dbReference type="GO" id="GO:0039502">
    <property type="term" value="P:symbiont-mediated suppression of host type I interferon-mediated signaling pathway"/>
    <property type="evidence" value="ECO:0007669"/>
    <property type="project" value="UniProtKB-KW"/>
</dbReference>
<dbReference type="GO" id="GO:0019079">
    <property type="term" value="P:viral genome replication"/>
    <property type="evidence" value="ECO:0007669"/>
    <property type="project" value="InterPro"/>
</dbReference>
<dbReference type="GO" id="GO:0019082">
    <property type="term" value="P:viral protein processing"/>
    <property type="evidence" value="ECO:0007669"/>
    <property type="project" value="InterPro"/>
</dbReference>
<dbReference type="GO" id="GO:0075523">
    <property type="term" value="P:viral translational frameshifting"/>
    <property type="evidence" value="ECO:0007669"/>
    <property type="project" value="UniProtKB-KW"/>
</dbReference>
<dbReference type="CDD" id="cd21901">
    <property type="entry name" value="alpha_betaCoV_Nsp10"/>
    <property type="match status" value="1"/>
</dbReference>
<dbReference type="CDD" id="cd21560">
    <property type="entry name" value="betaCoV-Nsp6"/>
    <property type="match status" value="1"/>
</dbReference>
<dbReference type="CDD" id="cd21519">
    <property type="entry name" value="betaCoV_Nsp2_MHV-like"/>
    <property type="match status" value="1"/>
</dbReference>
<dbReference type="CDD" id="cd21666">
    <property type="entry name" value="betaCoV_Nsp5_Mpro"/>
    <property type="match status" value="1"/>
</dbReference>
<dbReference type="CDD" id="cd21827">
    <property type="entry name" value="betaCoV_Nsp7"/>
    <property type="match status" value="1"/>
</dbReference>
<dbReference type="CDD" id="cd21831">
    <property type="entry name" value="betaCoV_Nsp8"/>
    <property type="match status" value="1"/>
</dbReference>
<dbReference type="CDD" id="cd21898">
    <property type="entry name" value="betaCoV_Nsp9"/>
    <property type="match status" value="1"/>
</dbReference>
<dbReference type="CDD" id="cd21732">
    <property type="entry name" value="betaCoV_PLPro"/>
    <property type="match status" value="1"/>
</dbReference>
<dbReference type="CDD" id="cd21473">
    <property type="entry name" value="cv_Nsp4_TM"/>
    <property type="match status" value="1"/>
</dbReference>
<dbReference type="CDD" id="cd21524">
    <property type="entry name" value="DPUP_MHV_Nsp3"/>
    <property type="match status" value="1"/>
</dbReference>
<dbReference type="CDD" id="cd21557">
    <property type="entry name" value="Macro_X_Nsp3-like"/>
    <property type="match status" value="1"/>
</dbReference>
<dbReference type="CDD" id="cd21879">
    <property type="entry name" value="MHV-like_Nsp1"/>
    <property type="match status" value="1"/>
</dbReference>
<dbReference type="CDD" id="cd21812">
    <property type="entry name" value="MHV-like_Nsp3_betaSM"/>
    <property type="match status" value="1"/>
</dbReference>
<dbReference type="CDD" id="cd21824">
    <property type="entry name" value="MHV-like_Nsp3_NAB"/>
    <property type="match status" value="1"/>
</dbReference>
<dbReference type="CDD" id="cd21714">
    <property type="entry name" value="TM_Y_MHV-like_Nsp3_C"/>
    <property type="match status" value="1"/>
</dbReference>
<dbReference type="CDD" id="cd21467">
    <property type="entry name" value="Ubl1_cv_Nsp3_N-like"/>
    <property type="match status" value="1"/>
</dbReference>
<dbReference type="FunFam" id="1.10.150.420:FF:000001">
    <property type="entry name" value="Replicase polyprotein"/>
    <property type="match status" value="1"/>
</dbReference>
<dbReference type="Gene3D" id="1.10.8.1190">
    <property type="match status" value="2"/>
</dbReference>
<dbReference type="Gene3D" id="2.60.120.1680">
    <property type="match status" value="1"/>
</dbReference>
<dbReference type="Gene3D" id="3.10.20.350">
    <property type="match status" value="1"/>
</dbReference>
<dbReference type="Gene3D" id="3.10.20.540">
    <property type="match status" value="1"/>
</dbReference>
<dbReference type="Gene3D" id="6.10.140.2090">
    <property type="match status" value="1"/>
</dbReference>
<dbReference type="Gene3D" id="1.10.150.420">
    <property type="entry name" value="Coronavirus nonstructural protein 4 C-terminus"/>
    <property type="match status" value="1"/>
</dbReference>
<dbReference type="Gene3D" id="3.40.220.10">
    <property type="entry name" value="Leucine Aminopeptidase, subunit E, domain 1"/>
    <property type="match status" value="1"/>
</dbReference>
<dbReference type="Gene3D" id="1.10.1840.10">
    <property type="entry name" value="main proteinase (3clpro) structure, domain 3"/>
    <property type="match status" value="1"/>
</dbReference>
<dbReference type="Gene3D" id="1.10.8.370">
    <property type="entry name" value="nsp7 replicase"/>
    <property type="match status" value="1"/>
</dbReference>
<dbReference type="Gene3D" id="3.30.70.3540">
    <property type="entry name" value="Nsp8 replicase, head domain"/>
    <property type="match status" value="1"/>
</dbReference>
<dbReference type="Gene3D" id="2.40.10.250">
    <property type="entry name" value="Replicase NSP9"/>
    <property type="match status" value="1"/>
</dbReference>
<dbReference type="Gene3D" id="3.40.50.11020">
    <property type="entry name" value="Replicase polyprotein, nucleic acid-binding domain"/>
    <property type="match status" value="1"/>
</dbReference>
<dbReference type="Gene3D" id="2.40.10.10">
    <property type="entry name" value="Trypsin-like serine proteases"/>
    <property type="match status" value="2"/>
</dbReference>
<dbReference type="InterPro" id="IPR046443">
    <property type="entry name" value="a/bCoV_NSP1_glob"/>
</dbReference>
<dbReference type="InterPro" id="IPR022570">
    <property type="entry name" value="B-CoV_A_NSP1"/>
</dbReference>
<dbReference type="InterPro" id="IPR046442">
    <property type="entry name" value="bCoV_NSP1_C"/>
</dbReference>
<dbReference type="InterPro" id="IPR043613">
    <property type="entry name" value="CoV_NSP2_C"/>
</dbReference>
<dbReference type="InterPro" id="IPR047573">
    <property type="entry name" value="CoV_NSP2_M"/>
</dbReference>
<dbReference type="InterPro" id="IPR049894">
    <property type="entry name" value="COV_NSP3_3ECTO"/>
</dbReference>
<dbReference type="InterPro" id="IPR043611">
    <property type="entry name" value="CoV_NSP3_C"/>
</dbReference>
<dbReference type="InterPro" id="IPR047566">
    <property type="entry name" value="CoV_NSP3_Y"/>
</dbReference>
<dbReference type="InterPro" id="IPR032505">
    <property type="entry name" value="CoV_NSP4_C"/>
</dbReference>
<dbReference type="InterPro" id="IPR043612">
    <property type="entry name" value="CoV_NSP4_N"/>
</dbReference>
<dbReference type="InterPro" id="IPR022733">
    <property type="entry name" value="DPUP_SUD_C_bCoV"/>
</dbReference>
<dbReference type="InterPro" id="IPR002589">
    <property type="entry name" value="Macro_dom"/>
</dbReference>
<dbReference type="InterPro" id="IPR043472">
    <property type="entry name" value="Macro_dom-like"/>
</dbReference>
<dbReference type="InterPro" id="IPR044371">
    <property type="entry name" value="Macro_X_NSP3-like"/>
</dbReference>
<dbReference type="InterPro" id="IPR036333">
    <property type="entry name" value="NSP10_sf_CoV"/>
</dbReference>
<dbReference type="InterPro" id="IPR044384">
    <property type="entry name" value="NSP2_MHV-like"/>
</dbReference>
<dbReference type="InterPro" id="IPR043615">
    <property type="entry name" value="NSP2_N_CoV"/>
</dbReference>
<dbReference type="InterPro" id="IPR044381">
    <property type="entry name" value="NSP3_DPUP_MHV"/>
</dbReference>
<dbReference type="InterPro" id="IPR047567">
    <property type="entry name" value="NSP3_G2M_bCoV"/>
</dbReference>
<dbReference type="InterPro" id="IPR032592">
    <property type="entry name" value="NSP3_NAB_bCoV"/>
</dbReference>
<dbReference type="InterPro" id="IPR042570">
    <property type="entry name" value="NSP3_NAB_bCoV_sf"/>
</dbReference>
<dbReference type="InterPro" id="IPR044357">
    <property type="entry name" value="NSP3_Ubl1_dom_CoV"/>
</dbReference>
<dbReference type="InterPro" id="IPR044353">
    <property type="entry name" value="Nsp3_Ubl2_dom_CoV"/>
</dbReference>
<dbReference type="InterPro" id="IPR038083">
    <property type="entry name" value="NSP3A-like"/>
</dbReference>
<dbReference type="InterPro" id="IPR038123">
    <property type="entry name" value="NSP4_C_sf_CoV"/>
</dbReference>
<dbReference type="InterPro" id="IPR044367">
    <property type="entry name" value="NSP6_betaCoV"/>
</dbReference>
<dbReference type="InterPro" id="IPR043610">
    <property type="entry name" value="NSP6_CoV"/>
</dbReference>
<dbReference type="InterPro" id="IPR014828">
    <property type="entry name" value="NSP7_CoV"/>
</dbReference>
<dbReference type="InterPro" id="IPR037204">
    <property type="entry name" value="NSP7_sf_CoV"/>
</dbReference>
<dbReference type="InterPro" id="IPR014829">
    <property type="entry name" value="NSP8_CoV"/>
</dbReference>
<dbReference type="InterPro" id="IPR037230">
    <property type="entry name" value="NSP8_sf_CoV"/>
</dbReference>
<dbReference type="InterPro" id="IPR014822">
    <property type="entry name" value="NSP9_CoV"/>
</dbReference>
<dbReference type="InterPro" id="IPR036499">
    <property type="entry name" value="NSP9_sf_CoV"/>
</dbReference>
<dbReference type="InterPro" id="IPR002705">
    <property type="entry name" value="Pept_C30/C16_B_coronavir"/>
</dbReference>
<dbReference type="InterPro" id="IPR013016">
    <property type="entry name" value="Peptidase_C16_CoV"/>
</dbReference>
<dbReference type="InterPro" id="IPR008740">
    <property type="entry name" value="Peptidase_C30_CoV"/>
</dbReference>
<dbReference type="InterPro" id="IPR043477">
    <property type="entry name" value="Peptidase_C30_dom3_CoV"/>
</dbReference>
<dbReference type="InterPro" id="IPR009003">
    <property type="entry name" value="Peptidase_S1_PA"/>
</dbReference>
<dbReference type="InterPro" id="IPR043504">
    <property type="entry name" value="Peptidase_S1_PA_chymotrypsin"/>
</dbReference>
<dbReference type="InterPro" id="IPR043177">
    <property type="entry name" value="PLpro_N_sf_CoV"/>
</dbReference>
<dbReference type="InterPro" id="IPR043503">
    <property type="entry name" value="PLpro_palm_finger_dom_CoV"/>
</dbReference>
<dbReference type="InterPro" id="IPR043178">
    <property type="entry name" value="PLpro_thumb_sf_CoV"/>
</dbReference>
<dbReference type="InterPro" id="IPR018995">
    <property type="entry name" value="RNA_synth_NSP10_CoV"/>
</dbReference>
<dbReference type="Pfam" id="PF11963">
    <property type="entry name" value="B-CoV_A_NSP1"/>
    <property type="match status" value="1"/>
</dbReference>
<dbReference type="Pfam" id="PF16251">
    <property type="entry name" value="bCoV_NAB"/>
    <property type="match status" value="1"/>
</dbReference>
<dbReference type="Pfam" id="PF09401">
    <property type="entry name" value="CoV_NSP10"/>
    <property type="match status" value="1"/>
</dbReference>
<dbReference type="Pfam" id="PF19218">
    <property type="entry name" value="CoV_NSP3_C"/>
    <property type="match status" value="1"/>
</dbReference>
<dbReference type="Pfam" id="PF16348">
    <property type="entry name" value="CoV_NSP4_C"/>
    <property type="match status" value="1"/>
</dbReference>
<dbReference type="Pfam" id="PF19217">
    <property type="entry name" value="CoV_NSP4_N"/>
    <property type="match status" value="1"/>
</dbReference>
<dbReference type="Pfam" id="PF19213">
    <property type="entry name" value="CoV_NSP6"/>
    <property type="match status" value="1"/>
</dbReference>
<dbReference type="Pfam" id="PF08716">
    <property type="entry name" value="CoV_NSP7"/>
    <property type="match status" value="1"/>
</dbReference>
<dbReference type="Pfam" id="PF08717">
    <property type="entry name" value="CoV_NSP8"/>
    <property type="match status" value="1"/>
</dbReference>
<dbReference type="Pfam" id="PF08710">
    <property type="entry name" value="CoV_NSP9"/>
    <property type="match status" value="1"/>
</dbReference>
<dbReference type="Pfam" id="PF08715">
    <property type="entry name" value="CoV_peptidase"/>
    <property type="match status" value="1"/>
</dbReference>
<dbReference type="Pfam" id="PF01661">
    <property type="entry name" value="Macro"/>
    <property type="match status" value="1"/>
</dbReference>
<dbReference type="Pfam" id="PF22104">
    <property type="entry name" value="MHV_Nsp3_DPUP"/>
    <property type="match status" value="1"/>
</dbReference>
<dbReference type="Pfam" id="PF01831">
    <property type="entry name" value="Peptidase_C16"/>
    <property type="match status" value="1"/>
</dbReference>
<dbReference type="Pfam" id="PF05409">
    <property type="entry name" value="Peptidase_C30"/>
    <property type="match status" value="1"/>
</dbReference>
<dbReference type="SMART" id="SM00506">
    <property type="entry name" value="A1pp"/>
    <property type="match status" value="1"/>
</dbReference>
<dbReference type="SUPFAM" id="SSF144246">
    <property type="entry name" value="Coronavirus NSP10-like"/>
    <property type="match status" value="1"/>
</dbReference>
<dbReference type="SUPFAM" id="SSF140367">
    <property type="entry name" value="Coronavirus NSP7-like"/>
    <property type="match status" value="1"/>
</dbReference>
<dbReference type="SUPFAM" id="SSF143076">
    <property type="entry name" value="Coronavirus NSP8-like"/>
    <property type="match status" value="1"/>
</dbReference>
<dbReference type="SUPFAM" id="SSF52949">
    <property type="entry name" value="Macro domain-like"/>
    <property type="match status" value="1"/>
</dbReference>
<dbReference type="SUPFAM" id="SSF159936">
    <property type="entry name" value="NSP3A-like"/>
    <property type="match status" value="1"/>
</dbReference>
<dbReference type="SUPFAM" id="SSF101816">
    <property type="entry name" value="Replicase NSP9"/>
    <property type="match status" value="1"/>
</dbReference>
<dbReference type="SUPFAM" id="SSF50494">
    <property type="entry name" value="Trypsin-like serine proteases"/>
    <property type="match status" value="1"/>
</dbReference>
<dbReference type="PROSITE" id="PS51963">
    <property type="entry name" value="BCOV_NSP1_C"/>
    <property type="match status" value="1"/>
</dbReference>
<dbReference type="PROSITE" id="PS51942">
    <property type="entry name" value="BCOV_NSP3C_C"/>
    <property type="match status" value="1"/>
</dbReference>
<dbReference type="PROSITE" id="PS51994">
    <property type="entry name" value="BCOV_NSP3E_G2M"/>
    <property type="match status" value="1"/>
</dbReference>
<dbReference type="PROSITE" id="PS51945">
    <property type="entry name" value="BCOV_NSP3E_NAB"/>
    <property type="match status" value="1"/>
</dbReference>
<dbReference type="PROSITE" id="PS51993">
    <property type="entry name" value="COV_3ECTO"/>
    <property type="match status" value="1"/>
</dbReference>
<dbReference type="PROSITE" id="PS51952">
    <property type="entry name" value="COV_EXON_MTASE_COACT"/>
    <property type="match status" value="1"/>
</dbReference>
<dbReference type="PROSITE" id="PS51962">
    <property type="entry name" value="COV_NSP1"/>
    <property type="match status" value="1"/>
</dbReference>
<dbReference type="PROSITE" id="PS51991">
    <property type="entry name" value="COV_NSP2_C"/>
    <property type="match status" value="1"/>
</dbReference>
<dbReference type="PROSITE" id="PS51990">
    <property type="entry name" value="COV_NSP2_M"/>
    <property type="match status" value="1"/>
</dbReference>
<dbReference type="PROSITE" id="PS51989">
    <property type="entry name" value="COV_NSP2_N"/>
    <property type="match status" value="1"/>
</dbReference>
<dbReference type="PROSITE" id="PS51992">
    <property type="entry name" value="COV_NSP3_Y"/>
    <property type="match status" value="1"/>
</dbReference>
<dbReference type="PROSITE" id="PS51943">
    <property type="entry name" value="COV_NSP3A_UBL"/>
    <property type="match status" value="1"/>
</dbReference>
<dbReference type="PROSITE" id="PS51944">
    <property type="entry name" value="COV_NSP3D_UBL"/>
    <property type="match status" value="1"/>
</dbReference>
<dbReference type="PROSITE" id="PS51946">
    <property type="entry name" value="COV_NSP4C"/>
    <property type="match status" value="1"/>
</dbReference>
<dbReference type="PROSITE" id="PS51949">
    <property type="entry name" value="COV_NSP7"/>
    <property type="match status" value="1"/>
</dbReference>
<dbReference type="PROSITE" id="PS51950">
    <property type="entry name" value="COV_NSP8"/>
    <property type="match status" value="1"/>
</dbReference>
<dbReference type="PROSITE" id="PS51951">
    <property type="entry name" value="COV_NSP9_SSRNA_BD"/>
    <property type="match status" value="1"/>
</dbReference>
<dbReference type="PROSITE" id="PS51442">
    <property type="entry name" value="M_PRO"/>
    <property type="match status" value="1"/>
</dbReference>
<dbReference type="PROSITE" id="PS51154">
    <property type="entry name" value="MACRO"/>
    <property type="match status" value="1"/>
</dbReference>
<dbReference type="PROSITE" id="PS51124">
    <property type="entry name" value="PEPTIDASE_C16"/>
    <property type="match status" value="2"/>
</dbReference>
<evidence type="ECO:0000250" key="1"/>
<evidence type="ECO:0000250" key="2">
    <source>
        <dbReference type="UniProtKB" id="P0DTC1"/>
    </source>
</evidence>
<evidence type="ECO:0000255" key="3"/>
<evidence type="ECO:0000255" key="4">
    <source>
        <dbReference type="PROSITE-ProRule" id="PRU00214"/>
    </source>
</evidence>
<evidence type="ECO:0000255" key="5">
    <source>
        <dbReference type="PROSITE-ProRule" id="PRU00444"/>
    </source>
</evidence>
<evidence type="ECO:0000255" key="6">
    <source>
        <dbReference type="PROSITE-ProRule" id="PRU00490"/>
    </source>
</evidence>
<evidence type="ECO:0000255" key="7">
    <source>
        <dbReference type="PROSITE-ProRule" id="PRU00772"/>
    </source>
</evidence>
<evidence type="ECO:0000255" key="8">
    <source>
        <dbReference type="PROSITE-ProRule" id="PRU01289"/>
    </source>
</evidence>
<evidence type="ECO:0000255" key="9">
    <source>
        <dbReference type="PROSITE-ProRule" id="PRU01290"/>
    </source>
</evidence>
<evidence type="ECO:0000255" key="10">
    <source>
        <dbReference type="PROSITE-ProRule" id="PRU01291"/>
    </source>
</evidence>
<evidence type="ECO:0000255" key="11">
    <source>
        <dbReference type="PROSITE-ProRule" id="PRU01294"/>
    </source>
</evidence>
<evidence type="ECO:0000255" key="12">
    <source>
        <dbReference type="PROSITE-ProRule" id="PRU01295"/>
    </source>
</evidence>
<evidence type="ECO:0000255" key="13">
    <source>
        <dbReference type="PROSITE-ProRule" id="PRU01296"/>
    </source>
</evidence>
<evidence type="ECO:0000255" key="14">
    <source>
        <dbReference type="PROSITE-ProRule" id="PRU01297"/>
    </source>
</evidence>
<evidence type="ECO:0000255" key="15">
    <source>
        <dbReference type="PROSITE-ProRule" id="PRU01307"/>
    </source>
</evidence>
<evidence type="ECO:0000255" key="16">
    <source>
        <dbReference type="PROSITE-ProRule" id="PRU01308"/>
    </source>
</evidence>
<evidence type="ECO:0000255" key="17">
    <source>
        <dbReference type="PROSITE-ProRule" id="PRU01333"/>
    </source>
</evidence>
<evidence type="ECO:0000255" key="18">
    <source>
        <dbReference type="PROSITE-ProRule" id="PRU01334"/>
    </source>
</evidence>
<evidence type="ECO:0000255" key="19">
    <source>
        <dbReference type="PROSITE-ProRule" id="PRU01335"/>
    </source>
</evidence>
<evidence type="ECO:0000255" key="20">
    <source>
        <dbReference type="PROSITE-ProRule" id="PRU01336"/>
    </source>
</evidence>
<evidence type="ECO:0000255" key="21">
    <source>
        <dbReference type="PROSITE-ProRule" id="PRU01337"/>
    </source>
</evidence>
<evidence type="ECO:0000255" key="22">
    <source>
        <dbReference type="PROSITE-ProRule" id="PRU01338"/>
    </source>
</evidence>
<evidence type="ECO:0000305" key="23"/>
<reference key="1">
    <citation type="journal article" date="2001" name="J. Gen. Virol.">
        <title>Comparison of genomic and predicted amino acid sequences of respiratory and enteric bovine coronaviruses isolated from the same animal with fatal shipping pneumonia.</title>
        <authorList>
            <person name="Chouljenko V.N."/>
            <person name="Lin X.Q."/>
            <person name="Storz J."/>
            <person name="Kousoulas K.G."/>
            <person name="Gorbalenya A.E."/>
        </authorList>
    </citation>
    <scope>NUCLEOTIDE SEQUENCE [GENOMIC RNA]</scope>
</reference>
<gene>
    <name type="ORF">1a</name>
</gene>
<sequence>MSKINKYGLELHWAPEFPWMFEDAEEKLDNPSSSEVDIVCSTTAQKLETGGICPENHVMVDCRRLLKQECCVQSSLIREIVMNTRPYDLEVLLQDALQSREAVLVTPPLGMSLEACYVRGCNPNGWTMGLFRRRSVCNTGRCAVNKHVAYQLYMIDPAGVCFGAGQFVGWVIPLAFMPVQSRKFIVPWVMYLRKCGEKGAYNKDHKRGGFEHVYNFKVEDAYDLVHDEPKGKFSKKAYALIRGYRGVKPLLYVDQYGCDYTGGLADGLEAYADKTLQEMKALFPIWSQELPFDVTVAWHVVRDPRYVMRLQSASTIRSVAYVANPTEDLCDGSVVIKEPVHVYADDSIILRQHNLVDIMSCFYMEADAVVNAFYGVDLKDCGFVMQFGYIDCEQDLCDFKGWVPGNMIDGFACTTCGHVYETGDLLAQSSGVLPVNPVLHTKSAAGYGGFGCKDSFTLYGQTVVYFGGCVYWSPARNIWIPILKSSVKSYDGLVYTGVVGCKAIVKETNLICKALYLDYVQHKCGNLHQRELLGVSDVWHKQLLLNRGVYKPLLENIDYFNMRRAKFSLETFTVCADGFMPFLLDDLVPRAYYLAVSGQAFCDYADKICHAVVSKSKELLDVSLDSLSAAIHYLNSKIVDLAQHFSDFGTSFVSKIVHFFKTFTTSTALAFAWVLFHVLHGAYIVVESDIYFVKNIPRYASAVAQAFRSVAKVVLDSLRVTFIDGLSCFKIGRRRICLSGSKIYEVERGLLHSSQLPLDVYDLTMPSQVQKAKQKPIYLKGSGSDFSLADSVVEVVTTSLTPCGYSEPPKVADKICIVDNVYMAKAGDKYYPVVVDGHVGLLDQAWRVPCAGRRVTFKEQPTVNEIASTPKTIKVFYELDKDFNTILNTACGVFEVDDTVDMEEFYAVVVDAIEEKLSPCKELEGVGAKVSAFLQKLEDNSLFLFDEAGEEVLASKLYCAFTAPEDDDFLEESGVEEDDVEGEETDLTVTSAGEPCVASEQEESSEILEDTLDDGPCVETSDSQVEEDVEMSDFADLESVIQDYENVCFEFYTTEPEFVKVLDLYVPKATRNNCWLRSVLAVMQKLPCQFKDKNLQDLWVLYKQQYSQLFVDTLVNKIPANIVVPQGGYVADFAYWFLTLCDWQCVAYWKCIKCDLALKLKGLDAMFFYGDVVSHVCKCGESMVLIDVDVPFTAHFALKDKLFCAFITKRSVYKAACVVDVNDSHSMAVVDGKQIDDHRVTSITSDKFDFIIGHGMSFSMTTFEIAQLYGSCITPNVCFVKGDIIKVSKRVKAEVVVNPANGHMAHGGGVAKAIAVAAGQQFVKETTDMVKSKGVCATGDCYVSTGGKLCKTVLNVVGPDARTQGKQSYALLERVYKHLNKYDCVVTTLISAGIFSVPSDVSLTYLLGTAEKQVVLVSNNQEDFDLISKCQITAVEGTKKLAERLSFNVGRSIVYETDANKLILSNDVAFVSTFNVLQDVLSLRHDIALDDDARTFVQSNVDVVPEGWRVVNKFYQINGVRTVKYFECPGGIDICSQDKVFGYVQQGSFNKATVAQIKALFLDKVDILLTVDGVNFTNRFVPVGENFGKSLGNVFCDGVNVTKHKCDINYKGKVFFQFDNLSSEDLKAVRSSFNFDQKELLAYYNMLVNCSKWQVVFNGKYFTFKQANNNCFVNVSCLMLQSLNLKFKIVQWQEAWLEFRSGRPARFVSLVLAKGGFKFGDPADSRDFLRVVFSQVDLTGAICDFEIACKCGVKQEQRTGVDAVMHFGTLSREDLEIGYTVDCSCGKKLIHCVRFDVPFLICSNTPASVKLPKGVGSANIFKGDKVGHYVHVKCEQSYQLYDASNVKKVTDVTGNLSDCLYLKNLKQTFKSVLTTYYLDDVKKIEYKPDLSQYYCDGGKYYTQRIIKAQFKTFEKVDGVYTNFKLIGHTICDILNAKLGFDSSKEFVEYKVTEWPTATGDVVLATDDLYVKRYERGCITFGKPVIWLSHEQASLNSLTYFNRPLLVDENKFDVLKVDDVDDGGDISESDAKESKEINIIKLSGVKKPFKVEDSVIVNDDTSEIKYVKSLSIVDVYDMWLTGCRYVVRTANDLSMAVNVPTIRKFIKFGMTLVSIPIDLLNLREIKPVFNVVKAVRNKISACFNFIKWLFVLLFGWIKISADNKVIYTTEVASKLTCKLVALAFKNAFLTFKWSVVARGACIIATIFLLWFNFIYANVIFSDFYLPKIGFLPTFVGKIAQWIKSTFSLVTICDLYSIQDVGFKNQYCNGSIACQFCLAGFDMLDNYKAIDVVQYEADRRAFVDYTGVLKIVIELIVSYALYTAWFYPLFALISIQILTTWLPELFMLSTLHWSVRLLVSLANMLPAHVFMRFYIIIASFIKLFSLFRHVAYGCSKPGCLFCYKRNRSLRVKCSTIVGGMIRYYDVMANGGTGFCSKHQWNCIDCDSYKPGNTFITVEAALDLSKELKRPIQPTDVAYHTVTDVKQVGCYMRLFYERDGQRTYDDVNASLFVDYSNLLHSKVKGVPNMHVVVVENDADKANFLNAAVFYAQSLFRPILMVDKNLITTANTGTSVTETMFDVYVDTFLSMFDVDKKSLNALIATAHSSIKQGTQICKVLDTFLSCARKSCSIDSDVDTKCLADSVMSAVSAGLELTDESCNNLVPTYLKGDNIVAADLGVLIQNSAKHVQGNVAKIAGVSCIWSVDAFNQLSSDFQHKLKKACCKTGLKLKLTYNKQMANVSVLTTPFSLKGGAVFSYFVYVCFLLSLVCFIGLWCLMPTYTVHKSDFQLPVYTSYKVLDNGVIRDVSVEDVCFANKFEQFDQWYESTFGLSYYSNSMACPIVVAVVDQDLGSTVFNVPTKVLRYGYHVLHFITHALSADGVQCYTPHSQISYSNFYASGCVLSSACTMFAMADGSPQPYCYTEGLMQNASLYSSLVPHVRYNLANAKGFIRFPEVLREGLVRIVRTRSMSYCRVGLCEEADEGICFNFNGSWVLNNDYYRSLPGTFCGRDVFDLIYQLFKGLAQPVDFLALTASSIAGAILAVIVVLVFYYLIKLKRAFGDYTSIVFVNVIVWCVNFMMLFVFQVYPTLSCVYAICYFYATLYFPSEISVIMHLQWLVMYGTIMPLWFCLLYISVVVSNHAFWVFAYCRRLGTSVRSDGTFEEMALTTFMITKDSYCKLKNSLSDVAFNRYLSLYNKYRYYSGKMDTAAYREAACSQLAKAMDTFTNNNGSDVLYQPPTASVSTSFLQSGIVKMVNPTSKVEPCIVSVTYGNMTLNGLWLDDKVYCPRHVICSASDMTNPDYTNLLCRVTSSDFTVLFDRLSLTVMSYQMQGCMLVLTVTLQNSRTPKYTFGVVKPGETFTVLAAYNGKPQGAFHVTMRSSYTIKGSFLCGSCGSVGYVLMGDCVKFVYMHQLELSTGCHTGTDFNGDFYGPYKDAQVVQLPVQDYIQSVNFVAWLYAAILNNCNWFVQSDKCSVEDFNVWALSNGFSQVKSDLVIDALASMTGVSLETLLAAIKRLKNGFQGRQIMGSCSFEDELTPSDVYQQLAGIKLQSKRTRLVKGIVCWIMASTFLFSCIITAFVKWTMFMYVTTNMLSITFCALCVISLAMLLVKHKHLYLTMYIIPVLFTLLYNNYLVVYKQTFRGYVYAWLSYYVPSVEYTYTDEVIYGMLLLIGMVFVTLRSINHDLFSFIMFVGRVISVVSLWYMGSNLEEEILLMLASLFGTYTWTTALSMAAAKVIAKWVAVNVLYFTDIPQIKIVLVCYLFIGYIISCYWGLFSLMNSLFRMPLGVYNYKISVQELRYMNANGLRPPKNSFEALMLNFKLLGIGGVPIIEVSQFQSKLTDVKCANVVLLNCLQHLHVASNSKLWQYCSTLHNEILATSDLGVAFEKLAQLLIVLFANPAAVDSKCLTSIEEVCDDYAKDNTVLQALQSEFVNMASFVEYEVAKKNLDEARSSGSANQQQLKQLEKACNIAKSAYERDRAVARKLERMADLALTNMYKEARINDKKSKVVSALQTMLFSMVRKLDNQALNSILDNAVKGCVPLNAIPSLAANTLTIIVPDKSVYDQVVDNVYVTYAGNVWQIQTIQDSDGTNKQLNEISDDCNWPLVIIANRHNEVSATVLQNNELMPAKLKTQVVNSGPDQTCNTPTQCYYNNSNNGKIVYAILSDVDGLKYTKILKDDGNFVVLELDPPCKFTVQDVKGLKIKYLYFVKGCNTLARGWVVGTISSTVRLQAGTATEYASNSSILSLCAFSVDPKKTYLDFIQQGGTPIANCVKMLCDHAGTGMAITVKPDATTNQDSYGGASVCIYCRARVEHPDVDGLCKLRGKFVQVPVGIKDPVSYVLTHDVCQVCGFWRDGSCSCVSTDTTVQSKDTNFLNGFGVRV</sequence>
<feature type="chain" id="PRO_0000338146" description="Replicase polyprotein 1a">
    <location>
        <begin position="1"/>
        <end position="4383"/>
    </location>
</feature>
<feature type="chain" id="PRO_0000338147" description="Non-structural protein 1" evidence="1">
    <location>
        <begin position="1"/>
        <end position="246"/>
    </location>
</feature>
<feature type="chain" id="PRO_0000338148" description="Non-structural protein 2" evidence="1">
    <location>
        <begin position="247"/>
        <end position="851"/>
    </location>
</feature>
<feature type="chain" id="PRO_0000338149" description="Papain-like protease nsp3" evidence="1">
    <location>
        <begin position="852"/>
        <end position="2750"/>
    </location>
</feature>
<feature type="chain" id="PRO_0000338150" description="Non-structural protein 4" evidence="1">
    <location>
        <begin position="2751"/>
        <end position="3246"/>
    </location>
</feature>
<feature type="chain" id="PRO_0000338151" description="3C-like proteinase nsp5" evidence="1">
    <location>
        <begin position="3247"/>
        <end position="3549"/>
    </location>
</feature>
<feature type="chain" id="PRO_0000338152" description="Non-structural protein 6" evidence="1">
    <location>
        <begin position="3550"/>
        <end position="3836"/>
    </location>
</feature>
<feature type="chain" id="PRO_0000338153" description="Non-structural protein 7" evidence="1">
    <location>
        <begin position="3837"/>
        <end position="3925"/>
    </location>
</feature>
<feature type="chain" id="PRO_0000338154" description="Non-structural protein 8" evidence="1">
    <location>
        <begin position="3926"/>
        <end position="4122"/>
    </location>
</feature>
<feature type="chain" id="PRO_0000338155" description="RNA-capping enzyme subunit nsp9" evidence="1">
    <location>
        <begin position="4123"/>
        <end position="4232"/>
    </location>
</feature>
<feature type="chain" id="PRO_0000338156" description="Non-structural protein 10" evidence="1">
    <location>
        <begin position="4233"/>
        <end position="4369"/>
    </location>
</feature>
<feature type="chain" id="PRO_0000338157" description="Non-structural protein 11" evidence="3">
    <location>
        <begin position="4370"/>
        <end position="4383"/>
    </location>
</feature>
<feature type="transmembrane region" description="Helical" evidence="3">
    <location>
        <begin position="2138"/>
        <end position="2158"/>
    </location>
</feature>
<feature type="transmembrane region" description="Helical" evidence="3">
    <location>
        <begin position="2199"/>
        <end position="2219"/>
    </location>
</feature>
<feature type="transmembrane region" description="Helical" evidence="3">
    <location>
        <begin position="2227"/>
        <end position="2247"/>
    </location>
</feature>
<feature type="transmembrane region" description="Helical" evidence="3">
    <location>
        <begin position="2313"/>
        <end position="2333"/>
    </location>
</feature>
<feature type="transmembrane region" description="Helical" evidence="3">
    <location>
        <begin position="2343"/>
        <end position="2363"/>
    </location>
</feature>
<feature type="transmembrane region" description="Helical" evidence="3">
    <location>
        <begin position="2365"/>
        <end position="2385"/>
    </location>
</feature>
<feature type="transmembrane region" description="Helical" evidence="3">
    <location>
        <begin position="2752"/>
        <end position="2772"/>
    </location>
</feature>
<feature type="transmembrane region" description="Helical" evidence="3">
    <location>
        <begin position="2824"/>
        <end position="2844"/>
    </location>
</feature>
<feature type="transmembrane region" description="Helical" evidence="3">
    <location>
        <begin position="3009"/>
        <end position="3029"/>
    </location>
</feature>
<feature type="transmembrane region" description="Helical" evidence="3">
    <location>
        <begin position="3031"/>
        <end position="3051"/>
    </location>
</feature>
<feature type="transmembrane region" description="Helical" evidence="3">
    <location>
        <begin position="3063"/>
        <end position="3083"/>
    </location>
</feature>
<feature type="transmembrane region" description="Helical" evidence="3">
    <location>
        <begin position="3090"/>
        <end position="3110"/>
    </location>
</feature>
<feature type="transmembrane region" description="Helical" evidence="3">
    <location>
        <begin position="3115"/>
        <end position="3135"/>
    </location>
</feature>
<feature type="transmembrane region" description="Helical" evidence="3">
    <location>
        <begin position="3558"/>
        <end position="3578"/>
    </location>
</feature>
<feature type="transmembrane region" description="Helical" evidence="3">
    <location>
        <begin position="3588"/>
        <end position="3608"/>
    </location>
</feature>
<feature type="transmembrane region" description="Helical" evidence="3">
    <location>
        <begin position="3614"/>
        <end position="3634"/>
    </location>
</feature>
<feature type="transmembrane region" description="Helical" evidence="3">
    <location>
        <begin position="3657"/>
        <end position="3677"/>
    </location>
</feature>
<feature type="transmembrane region" description="Helical" evidence="3">
    <location>
        <begin position="3684"/>
        <end position="3704"/>
    </location>
</feature>
<feature type="transmembrane region" description="Helical" evidence="3">
    <location>
        <begin position="3711"/>
        <end position="3731"/>
    </location>
</feature>
<feature type="transmembrane region" description="Helical" evidence="3">
    <location>
        <begin position="3755"/>
        <end position="3775"/>
    </location>
</feature>
<feature type="domain" description="CoV Nsp1 globular" evidence="15">
    <location>
        <begin position="54"/>
        <end position="196"/>
    </location>
</feature>
<feature type="domain" description="BetaCoV Nsp1 C-terminal" evidence="16">
    <location>
        <begin position="216"/>
        <end position="246"/>
    </location>
</feature>
<feature type="domain" description="CoV Nsp2 N-terminal" evidence="17">
    <location>
        <begin position="250"/>
        <end position="519"/>
    </location>
</feature>
<feature type="domain" description="CoV Nsp2 middle" evidence="18">
    <location>
        <begin position="524"/>
        <end position="713"/>
    </location>
</feature>
<feature type="domain" description="CoV Nsp2 C-terminal" evidence="19">
    <location>
        <begin position="733"/>
        <end position="851"/>
    </location>
</feature>
<feature type="domain" description="Ubiquitin-like 1" evidence="4">
    <location>
        <begin position="853"/>
        <end position="966"/>
    </location>
</feature>
<feature type="domain" description="Peptidase C16 1" evidence="5">
    <location>
        <begin position="1036"/>
        <end position="1274"/>
    </location>
</feature>
<feature type="domain" description="Macro" evidence="6">
    <location>
        <begin position="1275"/>
        <end position="1435"/>
    </location>
</feature>
<feature type="domain" description="DPUP" evidence="8">
    <location>
        <begin position="1491"/>
        <end position="1563"/>
    </location>
</feature>
<feature type="domain" description="Ubiquitin-like 2" evidence="4">
    <location>
        <begin position="1562"/>
        <end position="1617"/>
    </location>
</feature>
<feature type="domain" description="Peptidase C16 2" evidence="5">
    <location>
        <begin position="1631"/>
        <end position="1892"/>
    </location>
</feature>
<feature type="domain" description="Nucleic acid-binding" evidence="9">
    <location>
        <begin position="1906"/>
        <end position="2007"/>
    </location>
</feature>
<feature type="domain" description="G2M" evidence="22">
    <location>
        <begin position="2020"/>
        <end position="2169"/>
    </location>
</feature>
<feature type="domain" description="3Ecto" evidence="21">
    <location>
        <begin position="2235"/>
        <end position="2296"/>
    </location>
</feature>
<feature type="domain" description="CoV Nsp3 Y" evidence="20">
    <location>
        <begin position="2383"/>
        <end position="2750"/>
    </location>
</feature>
<feature type="domain" description="Nsp4C" evidence="10">
    <location>
        <begin position="3149"/>
        <end position="3246"/>
    </location>
</feature>
<feature type="domain" description="Peptidase C30" evidence="7">
    <location>
        <begin position="3247"/>
        <end position="3549"/>
    </location>
</feature>
<feature type="domain" description="RdRp Nsp7 cofactor" evidence="11">
    <location>
        <begin position="3837"/>
        <end position="3925"/>
    </location>
</feature>
<feature type="domain" description="RdRp Nsp8 cofactor" evidence="12">
    <location>
        <begin position="3926"/>
        <end position="4122"/>
    </location>
</feature>
<feature type="domain" description="Nsp9 ssRNA-binding" evidence="13">
    <location>
        <begin position="4123"/>
        <end position="4232"/>
    </location>
</feature>
<feature type="domain" description="ExoN/MTase coactivator" evidence="14">
    <location>
        <begin position="4233"/>
        <end position="4370"/>
    </location>
</feature>
<feature type="zinc finger region" description="C4-type 1" evidence="5">
    <location>
        <begin position="1151"/>
        <end position="1179"/>
    </location>
</feature>
<feature type="zinc finger region" description="C4-type 2" evidence="5">
    <location>
        <begin position="1749"/>
        <end position="1785"/>
    </location>
</feature>
<feature type="zinc finger region" evidence="1">
    <location>
        <begin position="4306"/>
        <end position="4322"/>
    </location>
</feature>
<feature type="zinc finger region" evidence="1">
    <location>
        <begin position="4348"/>
        <end position="4361"/>
    </location>
</feature>
<feature type="region of interest" description="C4" evidence="17">
    <location>
        <begin position="392"/>
        <end position="416"/>
    </location>
</feature>
<feature type="region of interest" description="HD1">
    <location>
        <begin position="2138"/>
        <end position="2385"/>
    </location>
</feature>
<feature type="region of interest" description="Y1" evidence="20">
    <location>
        <begin position="2383"/>
        <end position="2473"/>
    </location>
</feature>
<feature type="region of interest" description="ZF1" evidence="20">
    <location>
        <begin position="2387"/>
        <end position="2400"/>
    </location>
</feature>
<feature type="region of interest" description="ZF2" evidence="20">
    <location>
        <begin position="2433"/>
        <end position="2443"/>
    </location>
</feature>
<feature type="region of interest" description="CoV-Y" evidence="20">
    <location>
        <begin position="2474"/>
        <end position="2750"/>
    </location>
</feature>
<feature type="region of interest" description="Y2" evidence="20">
    <location>
        <begin position="2474"/>
        <end position="2566"/>
    </location>
</feature>
<feature type="region of interest" description="Y3" evidence="20">
    <location>
        <begin position="2567"/>
        <end position="2649"/>
    </location>
</feature>
<feature type="region of interest" description="Y4" evidence="20">
    <location>
        <begin position="2650"/>
        <end position="2750"/>
    </location>
</feature>
<feature type="region of interest" description="HD2">
    <location>
        <begin position="2752"/>
        <end position="3135"/>
    </location>
</feature>
<feature type="region of interest" description="HD3">
    <location>
        <begin position="3558"/>
        <end position="3775"/>
    </location>
</feature>
<feature type="active site" description="For PL1-PRO activity" evidence="5">
    <location>
        <position position="1074"/>
    </location>
</feature>
<feature type="active site" description="For PL1-PRO activity" evidence="5">
    <location>
        <position position="1225"/>
    </location>
</feature>
<feature type="active site" description="For PL1-PRO activity" evidence="5">
    <location>
        <position position="1236"/>
    </location>
</feature>
<feature type="active site" description="For PL2-PRO activity" evidence="5">
    <location>
        <position position="1671"/>
    </location>
</feature>
<feature type="active site" description="For PL2-PRO activity" evidence="5">
    <location>
        <position position="1828"/>
    </location>
</feature>
<feature type="active site" description="For PL2-PRO activity" evidence="5">
    <location>
        <position position="1842"/>
    </location>
</feature>
<feature type="active site" description="For 3CL-PRO activity" evidence="7">
    <location>
        <position position="3287"/>
    </location>
</feature>
<feature type="active site" description="For 3CL-PRO activity" evidence="7">
    <location>
        <position position="3391"/>
    </location>
</feature>
<feature type="binding site" evidence="17">
    <location>
        <position position="392"/>
    </location>
    <ligand>
        <name>Zn(2+)</name>
        <dbReference type="ChEBI" id="CHEBI:29105"/>
        <label>1</label>
    </ligand>
</feature>
<feature type="binding site" evidence="17">
    <location>
        <position position="397"/>
    </location>
    <ligand>
        <name>Zn(2+)</name>
        <dbReference type="ChEBI" id="CHEBI:29105"/>
        <label>1</label>
    </ligand>
</feature>
<feature type="binding site" evidence="17">
    <location>
        <position position="413"/>
    </location>
    <ligand>
        <name>Zn(2+)</name>
        <dbReference type="ChEBI" id="CHEBI:29105"/>
        <label>1</label>
    </ligand>
</feature>
<feature type="binding site" evidence="17">
    <location>
        <position position="416"/>
    </location>
    <ligand>
        <name>Zn(2+)</name>
        <dbReference type="ChEBI" id="CHEBI:29105"/>
        <label>1</label>
    </ligand>
</feature>
<feature type="binding site" evidence="5">
    <location>
        <position position="1151"/>
    </location>
    <ligand>
        <name>Zn(2+)</name>
        <dbReference type="ChEBI" id="CHEBI:29105"/>
        <label>2</label>
    </ligand>
</feature>
<feature type="binding site" evidence="5">
    <location>
        <position position="1154"/>
    </location>
    <ligand>
        <name>Zn(2+)</name>
        <dbReference type="ChEBI" id="CHEBI:29105"/>
        <label>2</label>
    </ligand>
</feature>
<feature type="binding site" evidence="5">
    <location>
        <position position="1177"/>
    </location>
    <ligand>
        <name>Zn(2+)</name>
        <dbReference type="ChEBI" id="CHEBI:29105"/>
        <label>2</label>
    </ligand>
</feature>
<feature type="binding site" evidence="5">
    <location>
        <position position="1179"/>
    </location>
    <ligand>
        <name>Zn(2+)</name>
        <dbReference type="ChEBI" id="CHEBI:29105"/>
        <label>2</label>
    </ligand>
</feature>
<feature type="binding site" evidence="5">
    <location>
        <position position="1749"/>
    </location>
    <ligand>
        <name>Zn(2+)</name>
        <dbReference type="ChEBI" id="CHEBI:29105"/>
        <label>3</label>
    </ligand>
</feature>
<feature type="binding site" evidence="5">
    <location>
        <position position="1751"/>
    </location>
    <ligand>
        <name>Zn(2+)</name>
        <dbReference type="ChEBI" id="CHEBI:29105"/>
        <label>3</label>
    </ligand>
</feature>
<feature type="binding site" evidence="5">
    <location>
        <position position="1783"/>
    </location>
    <ligand>
        <name>Zn(2+)</name>
        <dbReference type="ChEBI" id="CHEBI:29105"/>
        <label>3</label>
    </ligand>
</feature>
<feature type="binding site" evidence="5">
    <location>
        <position position="1785"/>
    </location>
    <ligand>
        <name>Zn(2+)</name>
        <dbReference type="ChEBI" id="CHEBI:29105"/>
        <label>3</label>
    </ligand>
</feature>
<feature type="binding site" evidence="20">
    <location>
        <position position="2387"/>
    </location>
    <ligand>
        <name>Zn(2+)</name>
        <dbReference type="ChEBI" id="CHEBI:29105"/>
        <label>4</label>
    </ligand>
</feature>
<feature type="binding site" evidence="20">
    <location>
        <position position="2392"/>
    </location>
    <ligand>
        <name>Zn(2+)</name>
        <dbReference type="ChEBI" id="CHEBI:29105"/>
        <label>4</label>
    </ligand>
</feature>
<feature type="binding site" evidence="20">
    <location>
        <position position="2397"/>
    </location>
    <ligand>
        <name>Zn(2+)</name>
        <dbReference type="ChEBI" id="CHEBI:29105"/>
        <label>4</label>
    </ligand>
</feature>
<feature type="binding site" evidence="20">
    <location>
        <position position="2400"/>
    </location>
    <ligand>
        <name>Zn(2+)</name>
        <dbReference type="ChEBI" id="CHEBI:29105"/>
        <label>4</label>
    </ligand>
</feature>
<feature type="binding site" evidence="20">
    <location>
        <position position="2433"/>
    </location>
    <ligand>
        <name>Zn(2+)</name>
        <dbReference type="ChEBI" id="CHEBI:29105"/>
        <label>5</label>
    </ligand>
</feature>
<feature type="binding site" evidence="20">
    <location>
        <position position="2436"/>
    </location>
    <ligand>
        <name>Zn(2+)</name>
        <dbReference type="ChEBI" id="CHEBI:29105"/>
        <label>5</label>
    </ligand>
</feature>
<feature type="binding site" evidence="20">
    <location>
        <position position="2440"/>
    </location>
    <ligand>
        <name>Zn(2+)</name>
        <dbReference type="ChEBI" id="CHEBI:29105"/>
        <label>5</label>
    </ligand>
</feature>
<feature type="binding site" evidence="20">
    <location>
        <position position="2443"/>
    </location>
    <ligand>
        <name>Zn(2+)</name>
        <dbReference type="ChEBI" id="CHEBI:29105"/>
        <label>5</label>
    </ligand>
</feature>
<feature type="binding site" evidence="14">
    <location>
        <position position="4306"/>
    </location>
    <ligand>
        <name>Zn(2+)</name>
        <dbReference type="ChEBI" id="CHEBI:29105"/>
        <label>6</label>
    </ligand>
</feature>
<feature type="binding site" evidence="14">
    <location>
        <position position="4309"/>
    </location>
    <ligand>
        <name>Zn(2+)</name>
        <dbReference type="ChEBI" id="CHEBI:29105"/>
        <label>6</label>
    </ligand>
</feature>
<feature type="binding site" evidence="14">
    <location>
        <position position="4315"/>
    </location>
    <ligand>
        <name>Zn(2+)</name>
        <dbReference type="ChEBI" id="CHEBI:29105"/>
        <label>6</label>
    </ligand>
</feature>
<feature type="binding site" evidence="14">
    <location>
        <position position="4322"/>
    </location>
    <ligand>
        <name>Zn(2+)</name>
        <dbReference type="ChEBI" id="CHEBI:29105"/>
        <label>6</label>
    </ligand>
</feature>
<feature type="binding site" evidence="14">
    <location>
        <position position="4348"/>
    </location>
    <ligand>
        <name>Zn(2+)</name>
        <dbReference type="ChEBI" id="CHEBI:29105"/>
        <label>7</label>
    </ligand>
</feature>
<feature type="binding site" evidence="14">
    <location>
        <position position="4351"/>
    </location>
    <ligand>
        <name>Zn(2+)</name>
        <dbReference type="ChEBI" id="CHEBI:29105"/>
        <label>7</label>
    </ligand>
</feature>
<feature type="binding site" evidence="14">
    <location>
        <position position="4359"/>
    </location>
    <ligand>
        <name>Zn(2+)</name>
        <dbReference type="ChEBI" id="CHEBI:29105"/>
        <label>7</label>
    </ligand>
</feature>
<feature type="binding site" evidence="14">
    <location>
        <position position="4361"/>
    </location>
    <ligand>
        <name>Zn(2+)</name>
        <dbReference type="ChEBI" id="CHEBI:29105"/>
        <label>7</label>
    </ligand>
</feature>
<feature type="site" description="Cleavage; by PL1-PRO" evidence="1">
    <location>
        <begin position="246"/>
        <end position="247"/>
    </location>
</feature>
<feature type="site" description="Cleavage; by PL1-PRO" evidence="1">
    <location>
        <begin position="851"/>
        <end position="852"/>
    </location>
</feature>
<feature type="site" description="Cleavage; by PL2-PRO" evidence="1">
    <location>
        <begin position="2750"/>
        <end position="2751"/>
    </location>
</feature>
<feature type="site" description="Cleavage; by 3CL-PRO" evidence="1">
    <location>
        <begin position="3246"/>
        <end position="3247"/>
    </location>
</feature>
<feature type="site" description="Cleavage; by 3CL-PRO" evidence="1">
    <location>
        <begin position="3549"/>
        <end position="3550"/>
    </location>
</feature>
<feature type="site" description="Cleavage; by 3CL-PRO" evidence="1">
    <location>
        <begin position="3836"/>
        <end position="3837"/>
    </location>
</feature>
<feature type="site" description="Cleavage; by 3CL-PRO" evidence="1">
    <location>
        <begin position="3925"/>
        <end position="3926"/>
    </location>
</feature>
<feature type="site" description="Cleavage; by 3CL-PRO" evidence="1">
    <location>
        <begin position="4122"/>
        <end position="4123"/>
    </location>
</feature>
<feature type="site" description="Cleavage; by 3CL-PRO" evidence="1">
    <location>
        <begin position="4232"/>
        <end position="4233"/>
    </location>
</feature>
<feature type="site" description="Cleavage; by 3CL-PRO" evidence="1">
    <location>
        <begin position="4369"/>
        <end position="4370"/>
    </location>
</feature>
<feature type="disulfide bond" evidence="21">
    <location>
        <begin position="2251"/>
        <end position="2275"/>
    </location>
</feature>
<feature type="disulfide bond" evidence="21">
    <location>
        <begin position="2266"/>
        <end position="2272"/>
    </location>
</feature>